<feature type="chain" id="PRO_1000144317" description="Large ribosomal subunit protein uL14">
    <location>
        <begin position="1"/>
        <end position="122"/>
    </location>
</feature>
<reference key="1">
    <citation type="journal article" date="2010" name="Appl. Environ. Microbiol.">
        <title>Conserved symbiotic plasmid DNA sequences in the multireplicon pangenomic structure of Rhizobium etli.</title>
        <authorList>
            <person name="Gonzalez V."/>
            <person name="Acosta J.L."/>
            <person name="Santamaria R.I."/>
            <person name="Bustos P."/>
            <person name="Fernandez J.L."/>
            <person name="Hernandez Gonzalez I.L."/>
            <person name="Diaz R."/>
            <person name="Flores M."/>
            <person name="Palacios R."/>
            <person name="Mora J."/>
            <person name="Davila G."/>
        </authorList>
    </citation>
    <scope>NUCLEOTIDE SEQUENCE [LARGE SCALE GENOMIC DNA]</scope>
    <source>
        <strain>CIAT 652</strain>
    </source>
</reference>
<comment type="function">
    <text evidence="1">Binds to 23S rRNA. Forms part of two intersubunit bridges in the 70S ribosome.</text>
</comment>
<comment type="subunit">
    <text evidence="1">Part of the 50S ribosomal subunit. Forms a cluster with proteins L3 and L19. In the 70S ribosome, L14 and L19 interact and together make contacts with the 16S rRNA in bridges B5 and B8.</text>
</comment>
<comment type="similarity">
    <text evidence="1">Belongs to the universal ribosomal protein uL14 family.</text>
</comment>
<keyword id="KW-0687">Ribonucleoprotein</keyword>
<keyword id="KW-0689">Ribosomal protein</keyword>
<keyword id="KW-0694">RNA-binding</keyword>
<keyword id="KW-0699">rRNA-binding</keyword>
<protein>
    <recommendedName>
        <fullName evidence="1">Large ribosomal subunit protein uL14</fullName>
    </recommendedName>
    <alternativeName>
        <fullName evidence="2">50S ribosomal protein L14</fullName>
    </alternativeName>
</protein>
<evidence type="ECO:0000255" key="1">
    <source>
        <dbReference type="HAMAP-Rule" id="MF_01367"/>
    </source>
</evidence>
<evidence type="ECO:0000305" key="2"/>
<accession>B3PWT1</accession>
<proteinExistence type="inferred from homology"/>
<dbReference type="EMBL" id="CP001074">
    <property type="protein sequence ID" value="ACE90729.1"/>
    <property type="molecule type" value="Genomic_DNA"/>
</dbReference>
<dbReference type="SMR" id="B3PWT1"/>
<dbReference type="KEGG" id="rec:RHECIAT_CH0001759"/>
<dbReference type="eggNOG" id="COG0093">
    <property type="taxonomic scope" value="Bacteria"/>
</dbReference>
<dbReference type="HOGENOM" id="CLU_095071_2_1_5"/>
<dbReference type="Proteomes" id="UP000008817">
    <property type="component" value="Chromosome"/>
</dbReference>
<dbReference type="GO" id="GO:0022625">
    <property type="term" value="C:cytosolic large ribosomal subunit"/>
    <property type="evidence" value="ECO:0007669"/>
    <property type="project" value="TreeGrafter"/>
</dbReference>
<dbReference type="GO" id="GO:0070180">
    <property type="term" value="F:large ribosomal subunit rRNA binding"/>
    <property type="evidence" value="ECO:0007669"/>
    <property type="project" value="TreeGrafter"/>
</dbReference>
<dbReference type="GO" id="GO:0003735">
    <property type="term" value="F:structural constituent of ribosome"/>
    <property type="evidence" value="ECO:0007669"/>
    <property type="project" value="InterPro"/>
</dbReference>
<dbReference type="GO" id="GO:0006412">
    <property type="term" value="P:translation"/>
    <property type="evidence" value="ECO:0007669"/>
    <property type="project" value="UniProtKB-UniRule"/>
</dbReference>
<dbReference type="CDD" id="cd00337">
    <property type="entry name" value="Ribosomal_uL14"/>
    <property type="match status" value="1"/>
</dbReference>
<dbReference type="FunFam" id="2.40.150.20:FF:000001">
    <property type="entry name" value="50S ribosomal protein L14"/>
    <property type="match status" value="1"/>
</dbReference>
<dbReference type="Gene3D" id="2.40.150.20">
    <property type="entry name" value="Ribosomal protein L14"/>
    <property type="match status" value="1"/>
</dbReference>
<dbReference type="HAMAP" id="MF_01367">
    <property type="entry name" value="Ribosomal_uL14"/>
    <property type="match status" value="1"/>
</dbReference>
<dbReference type="InterPro" id="IPR000218">
    <property type="entry name" value="Ribosomal_uL14"/>
</dbReference>
<dbReference type="InterPro" id="IPR005745">
    <property type="entry name" value="Ribosomal_uL14_bac-type"/>
</dbReference>
<dbReference type="InterPro" id="IPR019972">
    <property type="entry name" value="Ribosomal_uL14_CS"/>
</dbReference>
<dbReference type="InterPro" id="IPR036853">
    <property type="entry name" value="Ribosomal_uL14_sf"/>
</dbReference>
<dbReference type="NCBIfam" id="TIGR01067">
    <property type="entry name" value="rplN_bact"/>
    <property type="match status" value="1"/>
</dbReference>
<dbReference type="PANTHER" id="PTHR11761">
    <property type="entry name" value="50S/60S RIBOSOMAL PROTEIN L14/L23"/>
    <property type="match status" value="1"/>
</dbReference>
<dbReference type="PANTHER" id="PTHR11761:SF3">
    <property type="entry name" value="LARGE RIBOSOMAL SUBUNIT PROTEIN UL14M"/>
    <property type="match status" value="1"/>
</dbReference>
<dbReference type="Pfam" id="PF00238">
    <property type="entry name" value="Ribosomal_L14"/>
    <property type="match status" value="1"/>
</dbReference>
<dbReference type="SMART" id="SM01374">
    <property type="entry name" value="Ribosomal_L14"/>
    <property type="match status" value="1"/>
</dbReference>
<dbReference type="SUPFAM" id="SSF50193">
    <property type="entry name" value="Ribosomal protein L14"/>
    <property type="match status" value="1"/>
</dbReference>
<dbReference type="PROSITE" id="PS00049">
    <property type="entry name" value="RIBOSOMAL_L14"/>
    <property type="match status" value="1"/>
</dbReference>
<name>RL14_RHIE6</name>
<organism>
    <name type="scientific">Rhizobium etli (strain CIAT 652)</name>
    <dbReference type="NCBI Taxonomy" id="491916"/>
    <lineage>
        <taxon>Bacteria</taxon>
        <taxon>Pseudomonadati</taxon>
        <taxon>Pseudomonadota</taxon>
        <taxon>Alphaproteobacteria</taxon>
        <taxon>Hyphomicrobiales</taxon>
        <taxon>Rhizobiaceae</taxon>
        <taxon>Rhizobium/Agrobacterium group</taxon>
        <taxon>Rhizobium</taxon>
    </lineage>
</organism>
<gene>
    <name evidence="1" type="primary">rplN</name>
    <name type="ordered locus">RHECIAT_CH0001759</name>
</gene>
<sequence length="122" mass="13419">MIQMQTNLDVADNSGARRVMCIKVLGGSKRKYASIGDVIVVSIKEAIPRGRVKKGDVMKAVVVRTAKDIRRPDGSVIRFDTNAAVLIDNKKEPIGTRIFGPVPRELRAKNHMKIISLAPEVL</sequence>